<evidence type="ECO:0000255" key="1">
    <source>
        <dbReference type="HAMAP-Rule" id="MF_01341"/>
    </source>
</evidence>
<evidence type="ECO:0000256" key="2">
    <source>
        <dbReference type="SAM" id="MobiDB-lite"/>
    </source>
</evidence>
<evidence type="ECO:0000305" key="3"/>
<protein>
    <recommendedName>
        <fullName evidence="1">Large ribosomal subunit protein uL15</fullName>
    </recommendedName>
    <alternativeName>
        <fullName evidence="3">50S ribosomal protein L15</fullName>
    </alternativeName>
</protein>
<feature type="chain" id="PRO_1000054521" description="Large ribosomal subunit protein uL15">
    <location>
        <begin position="1"/>
        <end position="144"/>
    </location>
</feature>
<feature type="region of interest" description="Disordered" evidence="2">
    <location>
        <begin position="1"/>
        <end position="57"/>
    </location>
</feature>
<feature type="compositionally biased region" description="Gly residues" evidence="2">
    <location>
        <begin position="21"/>
        <end position="31"/>
    </location>
</feature>
<accession>A5VXR6</accession>
<keyword id="KW-0687">Ribonucleoprotein</keyword>
<keyword id="KW-0689">Ribosomal protein</keyword>
<keyword id="KW-0694">RNA-binding</keyword>
<keyword id="KW-0699">rRNA-binding</keyword>
<reference key="1">
    <citation type="submission" date="2007-05" db="EMBL/GenBank/DDBJ databases">
        <title>Complete sequence of Pseudomonas putida F1.</title>
        <authorList>
            <consortium name="US DOE Joint Genome Institute"/>
            <person name="Copeland A."/>
            <person name="Lucas S."/>
            <person name="Lapidus A."/>
            <person name="Barry K."/>
            <person name="Detter J.C."/>
            <person name="Glavina del Rio T."/>
            <person name="Hammon N."/>
            <person name="Israni S."/>
            <person name="Dalin E."/>
            <person name="Tice H."/>
            <person name="Pitluck S."/>
            <person name="Chain P."/>
            <person name="Malfatti S."/>
            <person name="Shin M."/>
            <person name="Vergez L."/>
            <person name="Schmutz J."/>
            <person name="Larimer F."/>
            <person name="Land M."/>
            <person name="Hauser L."/>
            <person name="Kyrpides N."/>
            <person name="Lykidis A."/>
            <person name="Parales R."/>
            <person name="Richardson P."/>
        </authorList>
    </citation>
    <scope>NUCLEOTIDE SEQUENCE [LARGE SCALE GENOMIC DNA]</scope>
    <source>
        <strain>ATCC 700007 / DSM 6899 / JCM 31910 / BCRC 17059 / LMG 24140 / F1</strain>
    </source>
</reference>
<proteinExistence type="inferred from homology"/>
<name>RL15_PSEP1</name>
<dbReference type="EMBL" id="CP000712">
    <property type="protein sequence ID" value="ABQ76676.1"/>
    <property type="molecule type" value="Genomic_DNA"/>
</dbReference>
<dbReference type="SMR" id="A5VXR6"/>
<dbReference type="KEGG" id="ppf:Pput_0506"/>
<dbReference type="eggNOG" id="COG0200">
    <property type="taxonomic scope" value="Bacteria"/>
</dbReference>
<dbReference type="HOGENOM" id="CLU_055188_4_2_6"/>
<dbReference type="GO" id="GO:0022625">
    <property type="term" value="C:cytosolic large ribosomal subunit"/>
    <property type="evidence" value="ECO:0007669"/>
    <property type="project" value="TreeGrafter"/>
</dbReference>
<dbReference type="GO" id="GO:0019843">
    <property type="term" value="F:rRNA binding"/>
    <property type="evidence" value="ECO:0007669"/>
    <property type="project" value="UniProtKB-UniRule"/>
</dbReference>
<dbReference type="GO" id="GO:0003735">
    <property type="term" value="F:structural constituent of ribosome"/>
    <property type="evidence" value="ECO:0007669"/>
    <property type="project" value="InterPro"/>
</dbReference>
<dbReference type="GO" id="GO:0006412">
    <property type="term" value="P:translation"/>
    <property type="evidence" value="ECO:0007669"/>
    <property type="project" value="UniProtKB-UniRule"/>
</dbReference>
<dbReference type="FunFam" id="3.100.10.10:FF:000003">
    <property type="entry name" value="50S ribosomal protein L15"/>
    <property type="match status" value="1"/>
</dbReference>
<dbReference type="Gene3D" id="3.100.10.10">
    <property type="match status" value="1"/>
</dbReference>
<dbReference type="HAMAP" id="MF_01341">
    <property type="entry name" value="Ribosomal_uL15"/>
    <property type="match status" value="1"/>
</dbReference>
<dbReference type="InterPro" id="IPR030878">
    <property type="entry name" value="Ribosomal_uL15"/>
</dbReference>
<dbReference type="InterPro" id="IPR021131">
    <property type="entry name" value="Ribosomal_uL15/eL18"/>
</dbReference>
<dbReference type="InterPro" id="IPR036227">
    <property type="entry name" value="Ribosomal_uL15/eL18_sf"/>
</dbReference>
<dbReference type="InterPro" id="IPR005749">
    <property type="entry name" value="Ribosomal_uL15_bac-type"/>
</dbReference>
<dbReference type="InterPro" id="IPR001196">
    <property type="entry name" value="Ribosomal_uL15_CS"/>
</dbReference>
<dbReference type="NCBIfam" id="TIGR01071">
    <property type="entry name" value="rplO_bact"/>
    <property type="match status" value="1"/>
</dbReference>
<dbReference type="PANTHER" id="PTHR12934">
    <property type="entry name" value="50S RIBOSOMAL PROTEIN L15"/>
    <property type="match status" value="1"/>
</dbReference>
<dbReference type="PANTHER" id="PTHR12934:SF11">
    <property type="entry name" value="LARGE RIBOSOMAL SUBUNIT PROTEIN UL15M"/>
    <property type="match status" value="1"/>
</dbReference>
<dbReference type="Pfam" id="PF00828">
    <property type="entry name" value="Ribosomal_L27A"/>
    <property type="match status" value="1"/>
</dbReference>
<dbReference type="SUPFAM" id="SSF52080">
    <property type="entry name" value="Ribosomal proteins L15p and L18e"/>
    <property type="match status" value="1"/>
</dbReference>
<dbReference type="PROSITE" id="PS00475">
    <property type="entry name" value="RIBOSOMAL_L15"/>
    <property type="match status" value="1"/>
</dbReference>
<organism>
    <name type="scientific">Pseudomonas putida (strain ATCC 700007 / DSM 6899 / JCM 31910 / BCRC 17059 / LMG 24140 / F1)</name>
    <dbReference type="NCBI Taxonomy" id="351746"/>
    <lineage>
        <taxon>Bacteria</taxon>
        <taxon>Pseudomonadati</taxon>
        <taxon>Pseudomonadota</taxon>
        <taxon>Gammaproteobacteria</taxon>
        <taxon>Pseudomonadales</taxon>
        <taxon>Pseudomonadaceae</taxon>
        <taxon>Pseudomonas</taxon>
    </lineage>
</organism>
<sequence>MKLNDLSPAPGSRREKHRPGRGIGSGLGKTGGRGHKGQTSRSGGSIAPGFEGGQQPLHRRLPKFGFVSLKAMDRAEVRLSELAKVEGDVISVQSLKDANVINQHIQRVKIMLSGEVTRAVTIKGIAATKGARAAIEAAGGKFEE</sequence>
<gene>
    <name evidence="1" type="primary">rplO</name>
    <name type="ordered locus">Pput_0506</name>
</gene>
<comment type="function">
    <text evidence="1">Binds to the 23S rRNA.</text>
</comment>
<comment type="subunit">
    <text evidence="1">Part of the 50S ribosomal subunit.</text>
</comment>
<comment type="similarity">
    <text evidence="1">Belongs to the universal ribosomal protein uL15 family.</text>
</comment>